<proteinExistence type="inferred from homology"/>
<sequence length="242" mass="24909">MPGAVSATPPPELATAARTLFGDRLSLAVAYAGLLVTDGVVRGLIGPREAPRIWDRHLLNCAAVAERIPLGSTVLDVGSGAGLPGLVLAVARPDLSVTLVEPLARRTAFLVEAVAQLDLAASVQVVRGRAEEIASGGGGVEPLTGDVVTARAVAPLDRLARWCLPLAVPGGRLVALKGASAVEEVAEHAAIVDRLGGGRPEVHHCGAGVVEPPTTVIEIARERVVAPARPKPAKRSRGGRRR</sequence>
<name>RSMG_SALTO</name>
<dbReference type="EC" id="2.1.1.-" evidence="1"/>
<dbReference type="EMBL" id="CP000667">
    <property type="protein sequence ID" value="ABP57016.1"/>
    <property type="molecule type" value="Genomic_DNA"/>
</dbReference>
<dbReference type="RefSeq" id="WP_012015780.1">
    <property type="nucleotide sequence ID" value="NC_009380.1"/>
</dbReference>
<dbReference type="SMR" id="A4XDK0"/>
<dbReference type="STRING" id="369723.Strop_4588"/>
<dbReference type="KEGG" id="stp:Strop_4588"/>
<dbReference type="PATRIC" id="fig|369723.5.peg.4747"/>
<dbReference type="eggNOG" id="COG0357">
    <property type="taxonomic scope" value="Bacteria"/>
</dbReference>
<dbReference type="HOGENOM" id="CLU_065341_5_0_11"/>
<dbReference type="Proteomes" id="UP000000235">
    <property type="component" value="Chromosome"/>
</dbReference>
<dbReference type="GO" id="GO:0005829">
    <property type="term" value="C:cytosol"/>
    <property type="evidence" value="ECO:0007669"/>
    <property type="project" value="TreeGrafter"/>
</dbReference>
<dbReference type="GO" id="GO:0070043">
    <property type="term" value="F:rRNA (guanine-N7-)-methyltransferase activity"/>
    <property type="evidence" value="ECO:0007669"/>
    <property type="project" value="UniProtKB-UniRule"/>
</dbReference>
<dbReference type="CDD" id="cd02440">
    <property type="entry name" value="AdoMet_MTases"/>
    <property type="match status" value="1"/>
</dbReference>
<dbReference type="Gene3D" id="3.40.50.150">
    <property type="entry name" value="Vaccinia Virus protein VP39"/>
    <property type="match status" value="1"/>
</dbReference>
<dbReference type="HAMAP" id="MF_00074">
    <property type="entry name" value="16SrRNA_methyltr_G"/>
    <property type="match status" value="1"/>
</dbReference>
<dbReference type="InterPro" id="IPR003682">
    <property type="entry name" value="rRNA_ssu_MeTfrase_G"/>
</dbReference>
<dbReference type="InterPro" id="IPR029063">
    <property type="entry name" value="SAM-dependent_MTases_sf"/>
</dbReference>
<dbReference type="NCBIfam" id="TIGR00138">
    <property type="entry name" value="rsmG_gidB"/>
    <property type="match status" value="1"/>
</dbReference>
<dbReference type="PANTHER" id="PTHR31760">
    <property type="entry name" value="S-ADENOSYL-L-METHIONINE-DEPENDENT METHYLTRANSFERASES SUPERFAMILY PROTEIN"/>
    <property type="match status" value="1"/>
</dbReference>
<dbReference type="PANTHER" id="PTHR31760:SF0">
    <property type="entry name" value="S-ADENOSYL-L-METHIONINE-DEPENDENT METHYLTRANSFERASES SUPERFAMILY PROTEIN"/>
    <property type="match status" value="1"/>
</dbReference>
<dbReference type="Pfam" id="PF02527">
    <property type="entry name" value="GidB"/>
    <property type="match status" value="1"/>
</dbReference>
<dbReference type="SUPFAM" id="SSF53335">
    <property type="entry name" value="S-adenosyl-L-methionine-dependent methyltransferases"/>
    <property type="match status" value="1"/>
</dbReference>
<gene>
    <name evidence="1" type="primary">rsmG</name>
    <name type="ordered locus">Strop_4588</name>
</gene>
<reference key="1">
    <citation type="journal article" date="2007" name="Proc. Natl. Acad. Sci. U.S.A.">
        <title>Genome sequencing reveals complex secondary metabolome in the marine actinomycete Salinispora tropica.</title>
        <authorList>
            <person name="Udwary D.W."/>
            <person name="Zeigler L."/>
            <person name="Asolkar R.N."/>
            <person name="Singan V."/>
            <person name="Lapidus A."/>
            <person name="Fenical W."/>
            <person name="Jensen P.R."/>
            <person name="Moore B.S."/>
        </authorList>
    </citation>
    <scope>NUCLEOTIDE SEQUENCE [LARGE SCALE GENOMIC DNA]</scope>
    <source>
        <strain>ATCC BAA-916 / DSM 44818 / JCM 13857 / NBRC 105044 / CNB-440</strain>
    </source>
</reference>
<protein>
    <recommendedName>
        <fullName evidence="1">Ribosomal RNA small subunit methyltransferase G</fullName>
        <ecNumber evidence="1">2.1.1.-</ecNumber>
    </recommendedName>
    <alternativeName>
        <fullName evidence="1">16S rRNA 7-methylguanosine methyltransferase</fullName>
        <shortName evidence="1">16S rRNA m7G methyltransferase</shortName>
    </alternativeName>
</protein>
<accession>A4XDK0</accession>
<comment type="function">
    <text evidence="1">Specifically methylates the N7 position of guanine in position 518 of 16S rRNA.</text>
</comment>
<comment type="subcellular location">
    <subcellularLocation>
        <location evidence="1">Cytoplasm</location>
    </subcellularLocation>
</comment>
<comment type="similarity">
    <text evidence="1">Belongs to the methyltransferase superfamily. RNA methyltransferase RsmG family.</text>
</comment>
<evidence type="ECO:0000255" key="1">
    <source>
        <dbReference type="HAMAP-Rule" id="MF_00074"/>
    </source>
</evidence>
<keyword id="KW-0963">Cytoplasm</keyword>
<keyword id="KW-0489">Methyltransferase</keyword>
<keyword id="KW-1185">Reference proteome</keyword>
<keyword id="KW-0698">rRNA processing</keyword>
<keyword id="KW-0949">S-adenosyl-L-methionine</keyword>
<keyword id="KW-0808">Transferase</keyword>
<organism>
    <name type="scientific">Salinispora tropica (strain ATCC BAA-916 / DSM 44818 / JCM 13857 / NBRC 105044 / CNB-440)</name>
    <dbReference type="NCBI Taxonomy" id="369723"/>
    <lineage>
        <taxon>Bacteria</taxon>
        <taxon>Bacillati</taxon>
        <taxon>Actinomycetota</taxon>
        <taxon>Actinomycetes</taxon>
        <taxon>Micromonosporales</taxon>
        <taxon>Micromonosporaceae</taxon>
        <taxon>Salinispora</taxon>
    </lineage>
</organism>
<feature type="chain" id="PRO_0000335425" description="Ribosomal RNA small subunit methyltransferase G">
    <location>
        <begin position="1"/>
        <end position="242"/>
    </location>
</feature>
<feature type="binding site" evidence="1">
    <location>
        <position position="78"/>
    </location>
    <ligand>
        <name>S-adenosyl-L-methionine</name>
        <dbReference type="ChEBI" id="CHEBI:59789"/>
    </ligand>
</feature>
<feature type="binding site" evidence="1">
    <location>
        <position position="83"/>
    </location>
    <ligand>
        <name>S-adenosyl-L-methionine</name>
        <dbReference type="ChEBI" id="CHEBI:59789"/>
    </ligand>
</feature>
<feature type="binding site" evidence="1">
    <location>
        <begin position="130"/>
        <end position="131"/>
    </location>
    <ligand>
        <name>S-adenosyl-L-methionine</name>
        <dbReference type="ChEBI" id="CHEBI:59789"/>
    </ligand>
</feature>
<feature type="binding site" evidence="1">
    <location>
        <position position="151"/>
    </location>
    <ligand>
        <name>S-adenosyl-L-methionine</name>
        <dbReference type="ChEBI" id="CHEBI:59789"/>
    </ligand>
</feature>